<protein>
    <recommendedName>
        <fullName evidence="1">Ribosomal RNA large subunit methyltransferase H</fullName>
        <ecNumber evidence="1">2.1.1.177</ecNumber>
    </recommendedName>
    <alternativeName>
        <fullName evidence="1">23S rRNA (pseudouridine1915-N3)-methyltransferase</fullName>
    </alternativeName>
    <alternativeName>
        <fullName evidence="1">23S rRNA m3Psi1915 methyltransferase</fullName>
    </alternativeName>
    <alternativeName>
        <fullName evidence="1">rRNA (pseudouridine-N3-)-methyltransferase RlmH</fullName>
    </alternativeName>
</protein>
<dbReference type="EC" id="2.1.1.177" evidence="1"/>
<dbReference type="EMBL" id="AE007869">
    <property type="protein sequence ID" value="AAK88491.1"/>
    <property type="molecule type" value="Genomic_DNA"/>
</dbReference>
<dbReference type="PIR" id="AG2917">
    <property type="entry name" value="AG2917"/>
</dbReference>
<dbReference type="PIR" id="B97692">
    <property type="entry name" value="B97692"/>
</dbReference>
<dbReference type="RefSeq" id="NP_355706.1">
    <property type="nucleotide sequence ID" value="NC_003062.2"/>
</dbReference>
<dbReference type="RefSeq" id="WP_010972558.1">
    <property type="nucleotide sequence ID" value="NC_003062.2"/>
</dbReference>
<dbReference type="SMR" id="Q8UBS4"/>
<dbReference type="STRING" id="176299.Atu2776"/>
<dbReference type="EnsemblBacteria" id="AAK88491">
    <property type="protein sequence ID" value="AAK88491"/>
    <property type="gene ID" value="Atu2776"/>
</dbReference>
<dbReference type="GeneID" id="1134814"/>
<dbReference type="KEGG" id="atu:Atu2776"/>
<dbReference type="PATRIC" id="fig|176299.10.peg.2786"/>
<dbReference type="eggNOG" id="COG1576">
    <property type="taxonomic scope" value="Bacteria"/>
</dbReference>
<dbReference type="HOGENOM" id="CLU_100552_1_1_5"/>
<dbReference type="OrthoDB" id="9806643at2"/>
<dbReference type="PhylomeDB" id="Q8UBS4"/>
<dbReference type="BioCyc" id="AGRO:ATU2776-MONOMER"/>
<dbReference type="Proteomes" id="UP000000813">
    <property type="component" value="Chromosome circular"/>
</dbReference>
<dbReference type="GO" id="GO:0005737">
    <property type="term" value="C:cytoplasm"/>
    <property type="evidence" value="ECO:0007669"/>
    <property type="project" value="UniProtKB-SubCell"/>
</dbReference>
<dbReference type="GO" id="GO:0070038">
    <property type="term" value="F:rRNA (pseudouridine-N3-)-methyltransferase activity"/>
    <property type="evidence" value="ECO:0007669"/>
    <property type="project" value="UniProtKB-UniRule"/>
</dbReference>
<dbReference type="CDD" id="cd18081">
    <property type="entry name" value="RlmH-like"/>
    <property type="match status" value="1"/>
</dbReference>
<dbReference type="Gene3D" id="3.40.1280.10">
    <property type="match status" value="1"/>
</dbReference>
<dbReference type="HAMAP" id="MF_00658">
    <property type="entry name" value="23SrRNA_methyltr_H"/>
    <property type="match status" value="1"/>
</dbReference>
<dbReference type="InterPro" id="IPR029028">
    <property type="entry name" value="Alpha/beta_knot_MTases"/>
</dbReference>
<dbReference type="InterPro" id="IPR003742">
    <property type="entry name" value="RlmH-like"/>
</dbReference>
<dbReference type="InterPro" id="IPR029026">
    <property type="entry name" value="tRNA_m1G_MTases_N"/>
</dbReference>
<dbReference type="NCBIfam" id="NF000989">
    <property type="entry name" value="PRK00103.2-3"/>
    <property type="match status" value="1"/>
</dbReference>
<dbReference type="PANTHER" id="PTHR33603">
    <property type="entry name" value="METHYLTRANSFERASE"/>
    <property type="match status" value="1"/>
</dbReference>
<dbReference type="PANTHER" id="PTHR33603:SF1">
    <property type="entry name" value="RIBOSOMAL RNA LARGE SUBUNIT METHYLTRANSFERASE H"/>
    <property type="match status" value="1"/>
</dbReference>
<dbReference type="Pfam" id="PF02590">
    <property type="entry name" value="SPOUT_MTase"/>
    <property type="match status" value="1"/>
</dbReference>
<dbReference type="PIRSF" id="PIRSF004505">
    <property type="entry name" value="MT_bac"/>
    <property type="match status" value="1"/>
</dbReference>
<dbReference type="SUPFAM" id="SSF75217">
    <property type="entry name" value="alpha/beta knot"/>
    <property type="match status" value="1"/>
</dbReference>
<proteinExistence type="inferred from homology"/>
<gene>
    <name evidence="1" type="primary">rlmH</name>
    <name type="ordered locus">Atu2776</name>
    <name type="ORF">AGR_C_5037</name>
</gene>
<name>RLMH_AGRFC</name>
<keyword id="KW-0963">Cytoplasm</keyword>
<keyword id="KW-0489">Methyltransferase</keyword>
<keyword id="KW-1185">Reference proteome</keyword>
<keyword id="KW-0698">rRNA processing</keyword>
<keyword id="KW-0949">S-adenosyl-L-methionine</keyword>
<keyword id="KW-0808">Transferase</keyword>
<comment type="function">
    <text evidence="1">Specifically methylates the pseudouridine at position 1915 (m3Psi1915) in 23S rRNA.</text>
</comment>
<comment type="catalytic activity">
    <reaction evidence="1">
        <text>pseudouridine(1915) in 23S rRNA + S-adenosyl-L-methionine = N(3)-methylpseudouridine(1915) in 23S rRNA + S-adenosyl-L-homocysteine + H(+)</text>
        <dbReference type="Rhea" id="RHEA:42752"/>
        <dbReference type="Rhea" id="RHEA-COMP:10221"/>
        <dbReference type="Rhea" id="RHEA-COMP:10222"/>
        <dbReference type="ChEBI" id="CHEBI:15378"/>
        <dbReference type="ChEBI" id="CHEBI:57856"/>
        <dbReference type="ChEBI" id="CHEBI:59789"/>
        <dbReference type="ChEBI" id="CHEBI:65314"/>
        <dbReference type="ChEBI" id="CHEBI:74486"/>
        <dbReference type="EC" id="2.1.1.177"/>
    </reaction>
</comment>
<comment type="subunit">
    <text evidence="1">Homodimer.</text>
</comment>
<comment type="subcellular location">
    <subcellularLocation>
        <location evidence="1">Cytoplasm</location>
    </subcellularLocation>
</comment>
<comment type="similarity">
    <text evidence="1">Belongs to the RNA methyltransferase RlmH family.</text>
</comment>
<feature type="chain" id="PRO_0000198078" description="Ribosomal RNA large subunit methyltransferase H">
    <location>
        <begin position="1"/>
        <end position="160"/>
    </location>
</feature>
<feature type="binding site" evidence="1">
    <location>
        <position position="76"/>
    </location>
    <ligand>
        <name>S-adenosyl-L-methionine</name>
        <dbReference type="ChEBI" id="CHEBI:59789"/>
    </ligand>
</feature>
<feature type="binding site" evidence="1">
    <location>
        <position position="108"/>
    </location>
    <ligand>
        <name>S-adenosyl-L-methionine</name>
        <dbReference type="ChEBI" id="CHEBI:59789"/>
    </ligand>
</feature>
<feature type="binding site" evidence="1">
    <location>
        <begin position="127"/>
        <end position="132"/>
    </location>
    <ligand>
        <name>S-adenosyl-L-methionine</name>
        <dbReference type="ChEBI" id="CHEBI:59789"/>
    </ligand>
</feature>
<accession>Q8UBS4</accession>
<reference key="1">
    <citation type="journal article" date="2001" name="Science">
        <title>The genome of the natural genetic engineer Agrobacterium tumefaciens C58.</title>
        <authorList>
            <person name="Wood D.W."/>
            <person name="Setubal J.C."/>
            <person name="Kaul R."/>
            <person name="Monks D.E."/>
            <person name="Kitajima J.P."/>
            <person name="Okura V.K."/>
            <person name="Zhou Y."/>
            <person name="Chen L."/>
            <person name="Wood G.E."/>
            <person name="Almeida N.F. Jr."/>
            <person name="Woo L."/>
            <person name="Chen Y."/>
            <person name="Paulsen I.T."/>
            <person name="Eisen J.A."/>
            <person name="Karp P.D."/>
            <person name="Bovee D. Sr."/>
            <person name="Chapman P."/>
            <person name="Clendenning J."/>
            <person name="Deatherage G."/>
            <person name="Gillet W."/>
            <person name="Grant C."/>
            <person name="Kutyavin T."/>
            <person name="Levy R."/>
            <person name="Li M.-J."/>
            <person name="McClelland E."/>
            <person name="Palmieri A."/>
            <person name="Raymond C."/>
            <person name="Rouse G."/>
            <person name="Saenphimmachak C."/>
            <person name="Wu Z."/>
            <person name="Romero P."/>
            <person name="Gordon D."/>
            <person name="Zhang S."/>
            <person name="Yoo H."/>
            <person name="Tao Y."/>
            <person name="Biddle P."/>
            <person name="Jung M."/>
            <person name="Krespan W."/>
            <person name="Perry M."/>
            <person name="Gordon-Kamm B."/>
            <person name="Liao L."/>
            <person name="Kim S."/>
            <person name="Hendrick C."/>
            <person name="Zhao Z.-Y."/>
            <person name="Dolan M."/>
            <person name="Chumley F."/>
            <person name="Tingey S.V."/>
            <person name="Tomb J.-F."/>
            <person name="Gordon M.P."/>
            <person name="Olson M.V."/>
            <person name="Nester E.W."/>
        </authorList>
    </citation>
    <scope>NUCLEOTIDE SEQUENCE [LARGE SCALE GENOMIC DNA]</scope>
    <source>
        <strain>C58 / ATCC 33970</strain>
    </source>
</reference>
<reference key="2">
    <citation type="journal article" date="2001" name="Science">
        <title>Genome sequence of the plant pathogen and biotechnology agent Agrobacterium tumefaciens C58.</title>
        <authorList>
            <person name="Goodner B."/>
            <person name="Hinkle G."/>
            <person name="Gattung S."/>
            <person name="Miller N."/>
            <person name="Blanchard M."/>
            <person name="Qurollo B."/>
            <person name="Goldman B.S."/>
            <person name="Cao Y."/>
            <person name="Askenazi M."/>
            <person name="Halling C."/>
            <person name="Mullin L."/>
            <person name="Houmiel K."/>
            <person name="Gordon J."/>
            <person name="Vaudin M."/>
            <person name="Iartchouk O."/>
            <person name="Epp A."/>
            <person name="Liu F."/>
            <person name="Wollam C."/>
            <person name="Allinger M."/>
            <person name="Doughty D."/>
            <person name="Scott C."/>
            <person name="Lappas C."/>
            <person name="Markelz B."/>
            <person name="Flanagan C."/>
            <person name="Crowell C."/>
            <person name="Gurson J."/>
            <person name="Lomo C."/>
            <person name="Sear C."/>
            <person name="Strub G."/>
            <person name="Cielo C."/>
            <person name="Slater S."/>
        </authorList>
    </citation>
    <scope>NUCLEOTIDE SEQUENCE [LARGE SCALE GENOMIC DNA]</scope>
    <source>
        <strain>C58 / ATCC 33970</strain>
    </source>
</reference>
<evidence type="ECO:0000255" key="1">
    <source>
        <dbReference type="HAMAP-Rule" id="MF_00658"/>
    </source>
</evidence>
<organism>
    <name type="scientific">Agrobacterium fabrum (strain C58 / ATCC 33970)</name>
    <name type="common">Agrobacterium tumefaciens (strain C58)</name>
    <dbReference type="NCBI Taxonomy" id="176299"/>
    <lineage>
        <taxon>Bacteria</taxon>
        <taxon>Pseudomonadati</taxon>
        <taxon>Pseudomonadota</taxon>
        <taxon>Alphaproteobacteria</taxon>
        <taxon>Hyphomicrobiales</taxon>
        <taxon>Rhizobiaceae</taxon>
        <taxon>Rhizobium/Agrobacterium group</taxon>
        <taxon>Agrobacterium</taxon>
        <taxon>Agrobacterium tumefaciens complex</taxon>
    </lineage>
</organism>
<sequence length="160" mass="17418">MRISIFAVGRLKSGPEKDLAARYIERLAKTGPAIGLEFSRVIEVGESRASNAETRKREEAAMLEKHLADGAVLVLLDERGKALDSPAFASLFGDLRDSGKRDLVIAIGGADGLDSALYDKATAVLNLGKLTWPHQIVRILIAEQLYRAVTILSGHPYHRV</sequence>